<feature type="chain" id="PRO_0000411814" description="Probable Xaa-Pro aminopeptidase P">
    <location>
        <begin position="1"/>
        <end position="612"/>
    </location>
</feature>
<feature type="binding site" evidence="1">
    <location>
        <position position="409"/>
    </location>
    <ligand>
        <name>Mn(2+)</name>
        <dbReference type="ChEBI" id="CHEBI:29035"/>
        <label>2</label>
    </ligand>
</feature>
<feature type="binding site" evidence="1">
    <location>
        <position position="420"/>
    </location>
    <ligand>
        <name>Mn(2+)</name>
        <dbReference type="ChEBI" id="CHEBI:29035"/>
        <label>1</label>
    </ligand>
</feature>
<feature type="binding site" evidence="1">
    <location>
        <position position="420"/>
    </location>
    <ligand>
        <name>Mn(2+)</name>
        <dbReference type="ChEBI" id="CHEBI:29035"/>
        <label>2</label>
    </ligand>
</feature>
<feature type="binding site" evidence="1">
    <location>
        <position position="518"/>
    </location>
    <ligand>
        <name>Mn(2+)</name>
        <dbReference type="ChEBI" id="CHEBI:29035"/>
        <label>1</label>
    </ligand>
</feature>
<feature type="binding site" evidence="1">
    <location>
        <position position="532"/>
    </location>
    <ligand>
        <name>Mn(2+)</name>
        <dbReference type="ChEBI" id="CHEBI:29035"/>
        <label>1</label>
    </ligand>
</feature>
<feature type="binding site" evidence="1">
    <location>
        <position position="532"/>
    </location>
    <ligand>
        <name>Mn(2+)</name>
        <dbReference type="ChEBI" id="CHEBI:29035"/>
        <label>2</label>
    </ligand>
</feature>
<sequence length="612" mass="67404">MEKVDTSGRLSKLRELMRAHSIDVYVVPSEDSHSSEYIAACDARREFISGFSGSAGCAVITLDKAALATDGRYFNQASKQLDHNWLLLKQGLQDVPTWQDWSAEQSAGGKIVAVDPELIAAAAAKKLAAKIHKFGGSELVALERNLVDVVWGKDRPDRPRNPVVILDTAFSGKNVETKLRDLRQELVKKDSLGMVVSMLDEVAWLLNLRGSDIPYNPVFFSYAVITLDTATLFVDDTKLHPDSLEYLRKNGIVTKPYSCIFDDVKALTSSKGVQGREKRTLLSSKASWALKRALGGDDLVEEVRSFIGDAKAVKNEAELAGMRACHIRDGIALIEYFAWLEDQLVAKRIVLDEVEAADKLEELRQKQENYVGLSFDTISSTGANAAVIHYKPERGSCPAIDPEAIYLCDSGAQYLDGTTDVTRTVHFGCPTAAEKLAYTLVLKGNIALDSAIFPKGTTGFALDCLARQHLWREGLDYRHGTGHGVGSYLNVHEGPIGIGTRVQFAEVSLASGNVVSIEPGFYEDGAFGIRIENLAIVREVQTQHSFGDKPYLGFEHVTMAPYCKNLIDISILTTAEKEWLNAHNTDIFNKTKDAFKDDALTLAWLTRETQPI</sequence>
<accession>C9SR45</accession>
<name>AMPP1_VERA1</name>
<keyword id="KW-0031">Aminopeptidase</keyword>
<keyword id="KW-0378">Hydrolase</keyword>
<keyword id="KW-0464">Manganese</keyword>
<keyword id="KW-0479">Metal-binding</keyword>
<keyword id="KW-0482">Metalloprotease</keyword>
<keyword id="KW-0645">Protease</keyword>
<keyword id="KW-1185">Reference proteome</keyword>
<reference key="1">
    <citation type="journal article" date="2011" name="PLoS Pathog.">
        <title>Comparative genomics yields insights into niche adaptation of plant vascular wilt pathogens.</title>
        <authorList>
            <person name="Klosterman S.J."/>
            <person name="Subbarao K.V."/>
            <person name="Kang S."/>
            <person name="Veronese P."/>
            <person name="Gold S.E."/>
            <person name="Thomma B.P.H.J."/>
            <person name="Chen Z."/>
            <person name="Henrissat B."/>
            <person name="Lee Y.-H."/>
            <person name="Park J."/>
            <person name="Garcia-Pedrajas M.D."/>
            <person name="Barbara D.J."/>
            <person name="Anchieta A."/>
            <person name="de Jonge R."/>
            <person name="Santhanam P."/>
            <person name="Maruthachalam K."/>
            <person name="Atallah Z."/>
            <person name="Amyotte S.G."/>
            <person name="Paz Z."/>
            <person name="Inderbitzin P."/>
            <person name="Hayes R.J."/>
            <person name="Heiman D.I."/>
            <person name="Young S."/>
            <person name="Zeng Q."/>
            <person name="Engels R."/>
            <person name="Galagan J."/>
            <person name="Cuomo C.A."/>
            <person name="Dobinson K.F."/>
            <person name="Ma L.-J."/>
        </authorList>
    </citation>
    <scope>NUCLEOTIDE SEQUENCE [LARGE SCALE GENOMIC DNA]</scope>
    <source>
        <strain>VaMs.102 / ATCC MYA-4576 / FGSC 10136</strain>
    </source>
</reference>
<proteinExistence type="inferred from homology"/>
<dbReference type="EC" id="3.4.11.9"/>
<dbReference type="EMBL" id="DS985222">
    <property type="protein sequence ID" value="EEY20847.1"/>
    <property type="molecule type" value="Genomic_DNA"/>
</dbReference>
<dbReference type="RefSeq" id="XP_003002386.1">
    <property type="nucleotide sequence ID" value="XM_003002340.1"/>
</dbReference>
<dbReference type="SMR" id="C9SR45"/>
<dbReference type="STRING" id="526221.C9SR45"/>
<dbReference type="GeneID" id="9527377"/>
<dbReference type="KEGG" id="val:VDBG_06957"/>
<dbReference type="eggNOG" id="KOG2413">
    <property type="taxonomic scope" value="Eukaryota"/>
</dbReference>
<dbReference type="HOGENOM" id="CLU_011781_2_3_1"/>
<dbReference type="OMA" id="EPGMILS"/>
<dbReference type="OrthoDB" id="9995434at2759"/>
<dbReference type="Proteomes" id="UP000008698">
    <property type="component" value="Unassembled WGS sequence"/>
</dbReference>
<dbReference type="GO" id="GO:0005737">
    <property type="term" value="C:cytoplasm"/>
    <property type="evidence" value="ECO:0007669"/>
    <property type="project" value="UniProtKB-ARBA"/>
</dbReference>
<dbReference type="GO" id="GO:0046872">
    <property type="term" value="F:metal ion binding"/>
    <property type="evidence" value="ECO:0007669"/>
    <property type="project" value="UniProtKB-KW"/>
</dbReference>
<dbReference type="GO" id="GO:0070006">
    <property type="term" value="F:metalloaminopeptidase activity"/>
    <property type="evidence" value="ECO:0007669"/>
    <property type="project" value="InterPro"/>
</dbReference>
<dbReference type="GO" id="GO:0006508">
    <property type="term" value="P:proteolysis"/>
    <property type="evidence" value="ECO:0007669"/>
    <property type="project" value="UniProtKB-KW"/>
</dbReference>
<dbReference type="CDD" id="cd01085">
    <property type="entry name" value="APP"/>
    <property type="match status" value="1"/>
</dbReference>
<dbReference type="FunFam" id="3.40.350.10:FF:000010">
    <property type="entry name" value="Probable Xaa-Pro aminopeptidase P"/>
    <property type="match status" value="1"/>
</dbReference>
<dbReference type="FunFam" id="3.90.230.10:FF:000007">
    <property type="entry name" value="Xaa-Pro aminopeptidase P"/>
    <property type="match status" value="1"/>
</dbReference>
<dbReference type="FunFam" id="3.40.350.10:FF:000003">
    <property type="entry name" value="Xaa-pro aminopeptidase P"/>
    <property type="match status" value="1"/>
</dbReference>
<dbReference type="Gene3D" id="3.90.230.10">
    <property type="entry name" value="Creatinase/methionine aminopeptidase superfamily"/>
    <property type="match status" value="1"/>
</dbReference>
<dbReference type="Gene3D" id="3.40.350.10">
    <property type="entry name" value="Creatinase/prolidase N-terminal domain"/>
    <property type="match status" value="2"/>
</dbReference>
<dbReference type="InterPro" id="IPR029149">
    <property type="entry name" value="Creatin/AminoP/Spt16_N"/>
</dbReference>
<dbReference type="InterPro" id="IPR036005">
    <property type="entry name" value="Creatinase/aminopeptidase-like"/>
</dbReference>
<dbReference type="InterPro" id="IPR000587">
    <property type="entry name" value="Creatinase_N"/>
</dbReference>
<dbReference type="InterPro" id="IPR000994">
    <property type="entry name" value="Pept_M24"/>
</dbReference>
<dbReference type="InterPro" id="IPR033740">
    <property type="entry name" value="Pept_M24B"/>
</dbReference>
<dbReference type="InterPro" id="IPR032416">
    <property type="entry name" value="Peptidase_M24_C"/>
</dbReference>
<dbReference type="InterPro" id="IPR001131">
    <property type="entry name" value="Peptidase_M24B_aminopep-P_CS"/>
</dbReference>
<dbReference type="InterPro" id="IPR050422">
    <property type="entry name" value="X-Pro_aminopeptidase_P"/>
</dbReference>
<dbReference type="PANTHER" id="PTHR43763">
    <property type="entry name" value="XAA-PRO AMINOPEPTIDASE 1"/>
    <property type="match status" value="1"/>
</dbReference>
<dbReference type="PANTHER" id="PTHR43763:SF6">
    <property type="entry name" value="XAA-PRO AMINOPEPTIDASE 1"/>
    <property type="match status" value="1"/>
</dbReference>
<dbReference type="Pfam" id="PF01321">
    <property type="entry name" value="Creatinase_N"/>
    <property type="match status" value="1"/>
</dbReference>
<dbReference type="Pfam" id="PF16189">
    <property type="entry name" value="Creatinase_N_2"/>
    <property type="match status" value="1"/>
</dbReference>
<dbReference type="Pfam" id="PF00557">
    <property type="entry name" value="Peptidase_M24"/>
    <property type="match status" value="1"/>
</dbReference>
<dbReference type="Pfam" id="PF16188">
    <property type="entry name" value="Peptidase_M24_C"/>
    <property type="match status" value="1"/>
</dbReference>
<dbReference type="SUPFAM" id="SSF55920">
    <property type="entry name" value="Creatinase/aminopeptidase"/>
    <property type="match status" value="1"/>
</dbReference>
<dbReference type="SUPFAM" id="SSF53092">
    <property type="entry name" value="Creatinase/prolidase N-terminal domain"/>
    <property type="match status" value="1"/>
</dbReference>
<dbReference type="PROSITE" id="PS00491">
    <property type="entry name" value="PROLINE_PEPTIDASE"/>
    <property type="match status" value="1"/>
</dbReference>
<comment type="function">
    <text evidence="1">Catalyzes the removal of a penultimate prolyl residue from the N-termini of peptides.</text>
</comment>
<comment type="catalytic activity">
    <reaction>
        <text>Release of any N-terminal amino acid, including proline, that is linked to proline, even from a dipeptide or tripeptide.</text>
        <dbReference type="EC" id="3.4.11.9"/>
    </reaction>
</comment>
<comment type="cofactor">
    <cofactor evidence="1">
        <name>Mn(2+)</name>
        <dbReference type="ChEBI" id="CHEBI:29035"/>
    </cofactor>
    <text evidence="1">Binds 2 manganese ions per subunit.</text>
</comment>
<comment type="similarity">
    <text evidence="2">Belongs to the peptidase M24B family.</text>
</comment>
<protein>
    <recommendedName>
        <fullName>Probable Xaa-Pro aminopeptidase P</fullName>
        <shortName>AMPP</shortName>
        <shortName>Aminopeptidase P</shortName>
        <ecNumber>3.4.11.9</ecNumber>
    </recommendedName>
    <alternativeName>
        <fullName>Aminoacylproline aminopeptidase</fullName>
    </alternativeName>
    <alternativeName>
        <fullName>Prolidase</fullName>
    </alternativeName>
</protein>
<organism>
    <name type="scientific">Verticillium alfalfae (strain VaMs.102 / ATCC MYA-4576 / FGSC 10136)</name>
    <name type="common">Verticillium wilt of alfalfa</name>
    <name type="synonym">Verticillium albo-atrum</name>
    <dbReference type="NCBI Taxonomy" id="526221"/>
    <lineage>
        <taxon>Eukaryota</taxon>
        <taxon>Fungi</taxon>
        <taxon>Dikarya</taxon>
        <taxon>Ascomycota</taxon>
        <taxon>Pezizomycotina</taxon>
        <taxon>Sordariomycetes</taxon>
        <taxon>Hypocreomycetidae</taxon>
        <taxon>Glomerellales</taxon>
        <taxon>Plectosphaerellaceae</taxon>
        <taxon>Verticillium</taxon>
    </lineage>
</organism>
<gene>
    <name type="primary">AMPP</name>
    <name type="ORF">VDBG_06957</name>
</gene>
<evidence type="ECO:0000250" key="1"/>
<evidence type="ECO:0000305" key="2"/>